<keyword id="KW-1185">Reference proteome</keyword>
<keyword id="KW-0687">Ribonucleoprotein</keyword>
<keyword id="KW-0689">Ribosomal protein</keyword>
<keyword id="KW-0694">RNA-binding</keyword>
<keyword id="KW-0699">rRNA-binding</keyword>
<reference key="1">
    <citation type="submission" date="2008-04" db="EMBL/GenBank/DDBJ databases">
        <title>Complete sequence of chromosome of Natranaerobius thermophilus JW/NM-WN-LF.</title>
        <authorList>
            <consortium name="US DOE Joint Genome Institute"/>
            <person name="Copeland A."/>
            <person name="Lucas S."/>
            <person name="Lapidus A."/>
            <person name="Glavina del Rio T."/>
            <person name="Dalin E."/>
            <person name="Tice H."/>
            <person name="Bruce D."/>
            <person name="Goodwin L."/>
            <person name="Pitluck S."/>
            <person name="Chertkov O."/>
            <person name="Brettin T."/>
            <person name="Detter J.C."/>
            <person name="Han C."/>
            <person name="Kuske C.R."/>
            <person name="Schmutz J."/>
            <person name="Larimer F."/>
            <person name="Land M."/>
            <person name="Hauser L."/>
            <person name="Kyrpides N."/>
            <person name="Lykidis A."/>
            <person name="Mesbah N.M."/>
            <person name="Wiegel J."/>
        </authorList>
    </citation>
    <scope>NUCLEOTIDE SEQUENCE [LARGE SCALE GENOMIC DNA]</scope>
    <source>
        <strain>ATCC BAA-1301 / DSM 18059 / JW/NM-WN-LF</strain>
    </source>
</reference>
<sequence length="229" mass="25626">MGQKINPIGLRIGVIKDWQSNWYADKNYTELVHEDIKIREYIENKLFNADVSAIQIDRAANRIKVTLHTAKPGMVIGKGGSGVEKLRSDIENLTGKKVHINVMEVKTPELDAHLAAKSIAIALERRVAFRRAMKQAVGRAMRQGAKGIKVMCSGRLGGAEMSRTEWYTEGNVPLQTLRADIDYGMVEANTAYGQIGVKCWINKGEVLPEVDENEETKEENKEKSEEKSE</sequence>
<accession>B2A4E5</accession>
<organism>
    <name type="scientific">Natranaerobius thermophilus (strain ATCC BAA-1301 / DSM 18059 / JW/NM-WN-LF)</name>
    <dbReference type="NCBI Taxonomy" id="457570"/>
    <lineage>
        <taxon>Bacteria</taxon>
        <taxon>Bacillati</taxon>
        <taxon>Bacillota</taxon>
        <taxon>Clostridia</taxon>
        <taxon>Natranaerobiales</taxon>
        <taxon>Natranaerobiaceae</taxon>
        <taxon>Natranaerobius</taxon>
    </lineage>
</organism>
<evidence type="ECO:0000255" key="1">
    <source>
        <dbReference type="HAMAP-Rule" id="MF_01309"/>
    </source>
</evidence>
<evidence type="ECO:0000256" key="2">
    <source>
        <dbReference type="SAM" id="MobiDB-lite"/>
    </source>
</evidence>
<evidence type="ECO:0000305" key="3"/>
<dbReference type="EMBL" id="CP001034">
    <property type="protein sequence ID" value="ACB83799.1"/>
    <property type="molecule type" value="Genomic_DNA"/>
</dbReference>
<dbReference type="RefSeq" id="WP_012446688.1">
    <property type="nucleotide sequence ID" value="NC_010718.1"/>
</dbReference>
<dbReference type="SMR" id="B2A4E5"/>
<dbReference type="FunCoup" id="B2A4E5">
    <property type="interactions" value="484"/>
</dbReference>
<dbReference type="STRING" id="457570.Nther_0200"/>
<dbReference type="KEGG" id="nth:Nther_0200"/>
<dbReference type="eggNOG" id="COG0092">
    <property type="taxonomic scope" value="Bacteria"/>
</dbReference>
<dbReference type="HOGENOM" id="CLU_058591_0_2_9"/>
<dbReference type="InParanoid" id="B2A4E5"/>
<dbReference type="OrthoDB" id="9806396at2"/>
<dbReference type="Proteomes" id="UP000001683">
    <property type="component" value="Chromosome"/>
</dbReference>
<dbReference type="GO" id="GO:0022627">
    <property type="term" value="C:cytosolic small ribosomal subunit"/>
    <property type="evidence" value="ECO:0007669"/>
    <property type="project" value="TreeGrafter"/>
</dbReference>
<dbReference type="GO" id="GO:0003729">
    <property type="term" value="F:mRNA binding"/>
    <property type="evidence" value="ECO:0007669"/>
    <property type="project" value="UniProtKB-UniRule"/>
</dbReference>
<dbReference type="GO" id="GO:0019843">
    <property type="term" value="F:rRNA binding"/>
    <property type="evidence" value="ECO:0007669"/>
    <property type="project" value="UniProtKB-UniRule"/>
</dbReference>
<dbReference type="GO" id="GO:0003735">
    <property type="term" value="F:structural constituent of ribosome"/>
    <property type="evidence" value="ECO:0007669"/>
    <property type="project" value="InterPro"/>
</dbReference>
<dbReference type="GO" id="GO:0006412">
    <property type="term" value="P:translation"/>
    <property type="evidence" value="ECO:0007669"/>
    <property type="project" value="UniProtKB-UniRule"/>
</dbReference>
<dbReference type="CDD" id="cd02412">
    <property type="entry name" value="KH-II_30S_S3"/>
    <property type="match status" value="1"/>
</dbReference>
<dbReference type="FunFam" id="3.30.1140.32:FF:000002">
    <property type="entry name" value="30S ribosomal protein S3"/>
    <property type="match status" value="1"/>
</dbReference>
<dbReference type="FunFam" id="3.30.300.20:FF:000001">
    <property type="entry name" value="30S ribosomal protein S3"/>
    <property type="match status" value="1"/>
</dbReference>
<dbReference type="Gene3D" id="3.30.300.20">
    <property type="match status" value="1"/>
</dbReference>
<dbReference type="Gene3D" id="3.30.1140.32">
    <property type="entry name" value="Ribosomal protein S3, C-terminal domain"/>
    <property type="match status" value="1"/>
</dbReference>
<dbReference type="HAMAP" id="MF_01309_B">
    <property type="entry name" value="Ribosomal_uS3_B"/>
    <property type="match status" value="1"/>
</dbReference>
<dbReference type="InterPro" id="IPR004087">
    <property type="entry name" value="KH_dom"/>
</dbReference>
<dbReference type="InterPro" id="IPR015946">
    <property type="entry name" value="KH_dom-like_a/b"/>
</dbReference>
<dbReference type="InterPro" id="IPR004044">
    <property type="entry name" value="KH_dom_type_2"/>
</dbReference>
<dbReference type="InterPro" id="IPR009019">
    <property type="entry name" value="KH_sf_prok-type"/>
</dbReference>
<dbReference type="InterPro" id="IPR036419">
    <property type="entry name" value="Ribosomal_S3_C_sf"/>
</dbReference>
<dbReference type="InterPro" id="IPR005704">
    <property type="entry name" value="Ribosomal_uS3_bac-typ"/>
</dbReference>
<dbReference type="InterPro" id="IPR001351">
    <property type="entry name" value="Ribosomal_uS3_C"/>
</dbReference>
<dbReference type="InterPro" id="IPR018280">
    <property type="entry name" value="Ribosomal_uS3_CS"/>
</dbReference>
<dbReference type="NCBIfam" id="TIGR01009">
    <property type="entry name" value="rpsC_bact"/>
    <property type="match status" value="1"/>
</dbReference>
<dbReference type="PANTHER" id="PTHR11760">
    <property type="entry name" value="30S/40S RIBOSOMAL PROTEIN S3"/>
    <property type="match status" value="1"/>
</dbReference>
<dbReference type="PANTHER" id="PTHR11760:SF19">
    <property type="entry name" value="SMALL RIBOSOMAL SUBUNIT PROTEIN US3C"/>
    <property type="match status" value="1"/>
</dbReference>
<dbReference type="Pfam" id="PF07650">
    <property type="entry name" value="KH_2"/>
    <property type="match status" value="1"/>
</dbReference>
<dbReference type="Pfam" id="PF00189">
    <property type="entry name" value="Ribosomal_S3_C"/>
    <property type="match status" value="1"/>
</dbReference>
<dbReference type="SMART" id="SM00322">
    <property type="entry name" value="KH"/>
    <property type="match status" value="1"/>
</dbReference>
<dbReference type="SUPFAM" id="SSF54814">
    <property type="entry name" value="Prokaryotic type KH domain (KH-domain type II)"/>
    <property type="match status" value="1"/>
</dbReference>
<dbReference type="SUPFAM" id="SSF54821">
    <property type="entry name" value="Ribosomal protein S3 C-terminal domain"/>
    <property type="match status" value="1"/>
</dbReference>
<dbReference type="PROSITE" id="PS50823">
    <property type="entry name" value="KH_TYPE_2"/>
    <property type="match status" value="1"/>
</dbReference>
<dbReference type="PROSITE" id="PS00548">
    <property type="entry name" value="RIBOSOMAL_S3"/>
    <property type="match status" value="1"/>
</dbReference>
<gene>
    <name evidence="1" type="primary">rpsC</name>
    <name type="ordered locus">Nther_0200</name>
</gene>
<comment type="function">
    <text evidence="1">Binds the lower part of the 30S subunit head. Binds mRNA in the 70S ribosome, positioning it for translation.</text>
</comment>
<comment type="subunit">
    <text evidence="1">Part of the 30S ribosomal subunit. Forms a tight complex with proteins S10 and S14.</text>
</comment>
<comment type="similarity">
    <text evidence="1">Belongs to the universal ribosomal protein uS3 family.</text>
</comment>
<protein>
    <recommendedName>
        <fullName evidence="1">Small ribosomal subunit protein uS3</fullName>
    </recommendedName>
    <alternativeName>
        <fullName evidence="3">30S ribosomal protein S3</fullName>
    </alternativeName>
</protein>
<proteinExistence type="inferred from homology"/>
<name>RS3_NATTJ</name>
<feature type="chain" id="PRO_1000140993" description="Small ribosomal subunit protein uS3">
    <location>
        <begin position="1"/>
        <end position="229"/>
    </location>
</feature>
<feature type="domain" description="KH type-2" evidence="1">
    <location>
        <begin position="38"/>
        <end position="106"/>
    </location>
</feature>
<feature type="region of interest" description="Disordered" evidence="2">
    <location>
        <begin position="208"/>
        <end position="229"/>
    </location>
</feature>
<feature type="compositionally biased region" description="Acidic residues" evidence="2">
    <location>
        <begin position="208"/>
        <end position="217"/>
    </location>
</feature>
<feature type="compositionally biased region" description="Basic and acidic residues" evidence="2">
    <location>
        <begin position="218"/>
        <end position="229"/>
    </location>
</feature>